<dbReference type="EMBL" id="AM933173">
    <property type="protein sequence ID" value="CAR38161.1"/>
    <property type="molecule type" value="Genomic_DNA"/>
</dbReference>
<dbReference type="RefSeq" id="WP_000580579.1">
    <property type="nucleotide sequence ID" value="NC_011274.1"/>
</dbReference>
<dbReference type="SMR" id="B5RCC7"/>
<dbReference type="KEGG" id="seg:SG2331"/>
<dbReference type="HOGENOM" id="CLU_131462_5_1_6"/>
<dbReference type="UniPathway" id="UPA00030"/>
<dbReference type="Proteomes" id="UP000008321">
    <property type="component" value="Chromosome"/>
</dbReference>
<dbReference type="GO" id="GO:0005886">
    <property type="term" value="C:plasma membrane"/>
    <property type="evidence" value="ECO:0007669"/>
    <property type="project" value="UniProtKB-SubCell"/>
</dbReference>
<dbReference type="GO" id="GO:1901505">
    <property type="term" value="F:carbohydrate derivative transmembrane transporter activity"/>
    <property type="evidence" value="ECO:0007669"/>
    <property type="project" value="InterPro"/>
</dbReference>
<dbReference type="GO" id="GO:0009245">
    <property type="term" value="P:lipid A biosynthetic process"/>
    <property type="evidence" value="ECO:0007669"/>
    <property type="project" value="UniProtKB-UniRule"/>
</dbReference>
<dbReference type="GO" id="GO:0009103">
    <property type="term" value="P:lipopolysaccharide biosynthetic process"/>
    <property type="evidence" value="ECO:0007669"/>
    <property type="project" value="UniProtKB-UniRule"/>
</dbReference>
<dbReference type="FunFam" id="1.10.3730.20:FF:000002">
    <property type="entry name" value="Probable 4-amino-4-deoxy-L-arabinose-phosphoundecaprenol flippase subunit ArnE"/>
    <property type="match status" value="1"/>
</dbReference>
<dbReference type="Gene3D" id="1.10.3730.20">
    <property type="match status" value="1"/>
</dbReference>
<dbReference type="HAMAP" id="MF_01869">
    <property type="entry name" value="Flippase_ArnE"/>
    <property type="match status" value="1"/>
</dbReference>
<dbReference type="InterPro" id="IPR000620">
    <property type="entry name" value="EamA_dom"/>
</dbReference>
<dbReference type="InterPro" id="IPR022883">
    <property type="entry name" value="Flippase_ArnE"/>
</dbReference>
<dbReference type="InterPro" id="IPR000390">
    <property type="entry name" value="Small_drug/metabolite_transptr"/>
</dbReference>
<dbReference type="NCBIfam" id="NF011625">
    <property type="entry name" value="PRK15051.1"/>
    <property type="match status" value="1"/>
</dbReference>
<dbReference type="PANTHER" id="PTHR30561:SF23">
    <property type="entry name" value="4-AMINO-4-DEOXY-L-ARABINOSE-PHOSPHOUNDECAPRENOL FLIPPASE SUBUNIT ARNE-RELATED"/>
    <property type="match status" value="1"/>
</dbReference>
<dbReference type="PANTHER" id="PTHR30561">
    <property type="entry name" value="SMR FAMILY PROTON-DEPENDENT DRUG EFFLUX TRANSPORTER SUGE"/>
    <property type="match status" value="1"/>
</dbReference>
<dbReference type="Pfam" id="PF00892">
    <property type="entry name" value="EamA"/>
    <property type="match status" value="1"/>
</dbReference>
<dbReference type="SUPFAM" id="SSF103481">
    <property type="entry name" value="Multidrug resistance efflux transporter EmrE"/>
    <property type="match status" value="1"/>
</dbReference>
<keyword id="KW-0997">Cell inner membrane</keyword>
<keyword id="KW-1003">Cell membrane</keyword>
<keyword id="KW-0441">Lipid A biosynthesis</keyword>
<keyword id="KW-0444">Lipid biosynthesis</keyword>
<keyword id="KW-0443">Lipid metabolism</keyword>
<keyword id="KW-0448">Lipopolysaccharide biosynthesis</keyword>
<keyword id="KW-0472">Membrane</keyword>
<keyword id="KW-0812">Transmembrane</keyword>
<keyword id="KW-1133">Transmembrane helix</keyword>
<keyword id="KW-0813">Transport</keyword>
<accession>B5RCC7</accession>
<comment type="function">
    <text evidence="1">Translocates 4-amino-4-deoxy-L-arabinose-phosphoundecaprenol (alpha-L-Ara4N-phosphoundecaprenol) from the cytoplasmic to the periplasmic side of the inner membrane.</text>
</comment>
<comment type="pathway">
    <text evidence="1">Bacterial outer membrane biogenesis; lipopolysaccharide biosynthesis.</text>
</comment>
<comment type="subunit">
    <text evidence="1">Heterodimer of ArnE and ArnF.</text>
</comment>
<comment type="subcellular location">
    <subcellularLocation>
        <location evidence="1">Cell inner membrane</location>
        <topology evidence="1">Multi-pass membrane protein</topology>
    </subcellularLocation>
</comment>
<comment type="similarity">
    <text evidence="1">Belongs to the ArnE family.</text>
</comment>
<sequence length="111" mass="12121">MIGVILVLASLLSVGGQLCQKQATRPLTVGGRRRHLMLWLGLALICMGAAMVLWLLVLQTLPVGIAYPMLSLNFVWVTLAAWKIWHEQVPPRHWFGVALIISGIIILGSAA</sequence>
<reference key="1">
    <citation type="journal article" date="2008" name="Genome Res.">
        <title>Comparative genome analysis of Salmonella enteritidis PT4 and Salmonella gallinarum 287/91 provides insights into evolutionary and host adaptation pathways.</title>
        <authorList>
            <person name="Thomson N.R."/>
            <person name="Clayton D.J."/>
            <person name="Windhorst D."/>
            <person name="Vernikos G."/>
            <person name="Davidson S."/>
            <person name="Churcher C."/>
            <person name="Quail M.A."/>
            <person name="Stevens M."/>
            <person name="Jones M.A."/>
            <person name="Watson M."/>
            <person name="Barron A."/>
            <person name="Layton A."/>
            <person name="Pickard D."/>
            <person name="Kingsley R.A."/>
            <person name="Bignell A."/>
            <person name="Clark L."/>
            <person name="Harris B."/>
            <person name="Ormond D."/>
            <person name="Abdellah Z."/>
            <person name="Brooks K."/>
            <person name="Cherevach I."/>
            <person name="Chillingworth T."/>
            <person name="Woodward J."/>
            <person name="Norberczak H."/>
            <person name="Lord A."/>
            <person name="Arrowsmith C."/>
            <person name="Jagels K."/>
            <person name="Moule S."/>
            <person name="Mungall K."/>
            <person name="Saunders M."/>
            <person name="Whitehead S."/>
            <person name="Chabalgoity J.A."/>
            <person name="Maskell D."/>
            <person name="Humphreys T."/>
            <person name="Roberts M."/>
            <person name="Barrow P.A."/>
            <person name="Dougan G."/>
            <person name="Parkhill J."/>
        </authorList>
    </citation>
    <scope>NUCLEOTIDE SEQUENCE [LARGE SCALE GENOMIC DNA]</scope>
    <source>
        <strain>287/91 / NCTC 13346</strain>
    </source>
</reference>
<protein>
    <recommendedName>
        <fullName evidence="1">Probable 4-amino-4-deoxy-L-arabinose-phosphoundecaprenol flippase subunit ArnE</fullName>
        <shortName evidence="1">L-Ara4N-phosphoundecaprenol flippase subunit ArnE</shortName>
    </recommendedName>
    <alternativeName>
        <fullName evidence="1">Undecaprenyl phosphate-aminoarabinose flippase subunit ArnE</fullName>
    </alternativeName>
</protein>
<feature type="chain" id="PRO_0000382994" description="Probable 4-amino-4-deoxy-L-arabinose-phosphoundecaprenol flippase subunit ArnE">
    <location>
        <begin position="1"/>
        <end position="111"/>
    </location>
</feature>
<feature type="transmembrane region" description="Helical" evidence="1">
    <location>
        <begin position="38"/>
        <end position="58"/>
    </location>
</feature>
<feature type="transmembrane region" description="Helical" evidence="1">
    <location>
        <begin position="61"/>
        <end position="81"/>
    </location>
</feature>
<feature type="transmembrane region" description="Helical" evidence="1">
    <location>
        <begin position="91"/>
        <end position="111"/>
    </location>
</feature>
<feature type="domain" description="EamA" evidence="1">
    <location>
        <begin position="40"/>
        <end position="109"/>
    </location>
</feature>
<name>ARNE_SALG2</name>
<proteinExistence type="inferred from homology"/>
<organism>
    <name type="scientific">Salmonella gallinarum (strain 287/91 / NCTC 13346)</name>
    <dbReference type="NCBI Taxonomy" id="550538"/>
    <lineage>
        <taxon>Bacteria</taxon>
        <taxon>Pseudomonadati</taxon>
        <taxon>Pseudomonadota</taxon>
        <taxon>Gammaproteobacteria</taxon>
        <taxon>Enterobacterales</taxon>
        <taxon>Enterobacteriaceae</taxon>
        <taxon>Salmonella</taxon>
    </lineage>
</organism>
<evidence type="ECO:0000255" key="1">
    <source>
        <dbReference type="HAMAP-Rule" id="MF_01869"/>
    </source>
</evidence>
<gene>
    <name evidence="1" type="primary">arnE</name>
    <name type="ordered locus">SG2331</name>
</gene>